<gene>
    <name type="primary">XYL1</name>
</gene>
<evidence type="ECO:0000255" key="1"/>
<evidence type="ECO:0000255" key="2">
    <source>
        <dbReference type="PROSITE-ProRule" id="PRU01097"/>
    </source>
</evidence>
<evidence type="ECO:0000255" key="3">
    <source>
        <dbReference type="PROSITE-ProRule" id="PRU10062"/>
    </source>
</evidence>
<evidence type="ECO:0000255" key="4">
    <source>
        <dbReference type="PROSITE-ProRule" id="PRU10063"/>
    </source>
</evidence>
<evidence type="ECO:0000256" key="5">
    <source>
        <dbReference type="SAM" id="MobiDB-lite"/>
    </source>
</evidence>
<evidence type="ECO:0000305" key="6"/>
<name>XYN1_COCCA</name>
<accession>Q06562</accession>
<sequence length="221" mass="23728">MVSFTSIITAAVAATGALAAPATDVSLVARQNTPNGEGTHNGCFWSWWSDGGARATYTNGAGGSYSVSWGSGGNLVGGKGWNPGTARTITYSGTYNYNGNSYLAVYGWTRNPLVEYYVVENFGTYDPSSQSQNKGTVTSDGSSYKIAQSTRTNQPSIDGTRTFQQYWSVRQNKRSSGSVNMKTHFDAWASKGMNLGQHYYQIVATEGYFSTGNAQITVNCP</sequence>
<keyword id="KW-0119">Carbohydrate metabolism</keyword>
<keyword id="KW-0903">Direct protein sequencing</keyword>
<keyword id="KW-0326">Glycosidase</keyword>
<keyword id="KW-0378">Hydrolase</keyword>
<keyword id="KW-0624">Polysaccharide degradation</keyword>
<keyword id="KW-0964">Secreted</keyword>
<keyword id="KW-0732">Signal</keyword>
<keyword id="KW-0858">Xylan degradation</keyword>
<feature type="signal peptide" evidence="1">
    <location>
        <begin position="1"/>
        <end position="30"/>
    </location>
</feature>
<feature type="chain" id="PRO_0000008003" description="Endo-1,4-beta-xylanase I">
    <location>
        <begin position="31"/>
        <end position="221"/>
    </location>
</feature>
<feature type="domain" description="GH11" evidence="2">
    <location>
        <begin position="31"/>
        <end position="219"/>
    </location>
</feature>
<feature type="region of interest" description="Disordered" evidence="5">
    <location>
        <begin position="126"/>
        <end position="157"/>
    </location>
</feature>
<feature type="active site" description="Nucleophile" evidence="3">
    <location>
        <position position="115"/>
    </location>
</feature>
<feature type="active site" description="Proton donor" evidence="4">
    <location>
        <position position="206"/>
    </location>
</feature>
<feature type="sequence conflict" description="In Ref. 2; AA sequence." evidence="6" ref="2">
    <original>W</original>
    <variation>I</variation>
    <location>
        <position position="81"/>
    </location>
</feature>
<feature type="sequence conflict" description="In Ref. 2; AA sequence." evidence="6" ref="2">
    <original>G</original>
    <variation>A</variation>
    <location>
        <position position="107"/>
    </location>
</feature>
<feature type="sequence conflict" description="In Ref. 2; AA sequence." evidence="6" ref="2">
    <original>S</original>
    <variation>W</variation>
    <location>
        <position position="131"/>
    </location>
</feature>
<protein>
    <recommendedName>
        <fullName>Endo-1,4-beta-xylanase I</fullName>
        <shortName>Xylanase I</shortName>
        <ecNumber>3.2.1.8</ecNumber>
    </recommendedName>
    <alternativeName>
        <fullName>1,4-beta-D-xylan xylanohydrolase 1</fullName>
    </alternativeName>
</protein>
<dbReference type="EC" id="3.2.1.8"/>
<dbReference type="EMBL" id="L13596">
    <property type="protein sequence ID" value="AAA33024.1"/>
    <property type="molecule type" value="Genomic_DNA"/>
</dbReference>
<dbReference type="SMR" id="Q06562"/>
<dbReference type="CAZy" id="GH11">
    <property type="family name" value="Glycoside Hydrolase Family 11"/>
</dbReference>
<dbReference type="BRENDA" id="3.2.1.8">
    <property type="organism ID" value="1551"/>
</dbReference>
<dbReference type="UniPathway" id="UPA00114"/>
<dbReference type="PHI-base" id="PHI:571"/>
<dbReference type="GO" id="GO:0005576">
    <property type="term" value="C:extracellular region"/>
    <property type="evidence" value="ECO:0007669"/>
    <property type="project" value="UniProtKB-SubCell"/>
</dbReference>
<dbReference type="GO" id="GO:0031176">
    <property type="term" value="F:endo-1,4-beta-xylanase activity"/>
    <property type="evidence" value="ECO:0007669"/>
    <property type="project" value="UniProtKB-EC"/>
</dbReference>
<dbReference type="GO" id="GO:0045493">
    <property type="term" value="P:xylan catabolic process"/>
    <property type="evidence" value="ECO:0007669"/>
    <property type="project" value="UniProtKB-UniPathway"/>
</dbReference>
<dbReference type="FunFam" id="2.60.120.180:FF:000001">
    <property type="entry name" value="Endo-1,4-beta-xylanase"/>
    <property type="match status" value="1"/>
</dbReference>
<dbReference type="Gene3D" id="2.60.120.180">
    <property type="match status" value="1"/>
</dbReference>
<dbReference type="InterPro" id="IPR013320">
    <property type="entry name" value="ConA-like_dom_sf"/>
</dbReference>
<dbReference type="InterPro" id="IPR013319">
    <property type="entry name" value="GH11/12"/>
</dbReference>
<dbReference type="InterPro" id="IPR018208">
    <property type="entry name" value="GH11_AS_1"/>
</dbReference>
<dbReference type="InterPro" id="IPR033119">
    <property type="entry name" value="GH11_AS_2"/>
</dbReference>
<dbReference type="InterPro" id="IPR033123">
    <property type="entry name" value="GH11_dom"/>
</dbReference>
<dbReference type="InterPro" id="IPR001137">
    <property type="entry name" value="Glyco_hydro_11"/>
</dbReference>
<dbReference type="PANTHER" id="PTHR46828:SF3">
    <property type="entry name" value="ENDO-1,4-BETA-XYLANASE"/>
    <property type="match status" value="1"/>
</dbReference>
<dbReference type="PANTHER" id="PTHR46828">
    <property type="entry name" value="ENDO-1,4-BETA-XYLANASE A-RELATED"/>
    <property type="match status" value="1"/>
</dbReference>
<dbReference type="Pfam" id="PF00457">
    <property type="entry name" value="Glyco_hydro_11"/>
    <property type="match status" value="1"/>
</dbReference>
<dbReference type="PRINTS" id="PR00911">
    <property type="entry name" value="GLHYDRLASE11"/>
</dbReference>
<dbReference type="SUPFAM" id="SSF49899">
    <property type="entry name" value="Concanavalin A-like lectins/glucanases"/>
    <property type="match status" value="1"/>
</dbReference>
<dbReference type="PROSITE" id="PS00776">
    <property type="entry name" value="GH11_1"/>
    <property type="match status" value="1"/>
</dbReference>
<dbReference type="PROSITE" id="PS00777">
    <property type="entry name" value="GH11_2"/>
    <property type="match status" value="1"/>
</dbReference>
<dbReference type="PROSITE" id="PS51761">
    <property type="entry name" value="GH11_3"/>
    <property type="match status" value="1"/>
</dbReference>
<proteinExistence type="evidence at protein level"/>
<organism>
    <name type="scientific">Cochliobolus carbonum</name>
    <name type="common">Maize leaf spot fungus</name>
    <name type="synonym">Bipolaris zeicola</name>
    <dbReference type="NCBI Taxonomy" id="5017"/>
    <lineage>
        <taxon>Eukaryota</taxon>
        <taxon>Fungi</taxon>
        <taxon>Dikarya</taxon>
        <taxon>Ascomycota</taxon>
        <taxon>Pezizomycotina</taxon>
        <taxon>Dothideomycetes</taxon>
        <taxon>Pleosporomycetidae</taxon>
        <taxon>Pleosporales</taxon>
        <taxon>Pleosporineae</taxon>
        <taxon>Pleosporaceae</taxon>
        <taxon>Bipolaris</taxon>
    </lineage>
</organism>
<reference key="1">
    <citation type="journal article" date="1993" name="Mol. Plant Microbe Interact.">
        <title>Cloning and targeted gene disruption of XYL1, a beta 1,4-xylanase gene from the maize pathogen Cochliobolus carbonum.</title>
        <authorList>
            <person name="Apel P.C."/>
            <person name="Panaccione D.G."/>
            <person name="Holden F.R."/>
            <person name="Walton J.D."/>
        </authorList>
    </citation>
    <scope>NUCLEOTIDE SEQUENCE [GENOMIC DNA]</scope>
    <source>
        <strain>Race 1 / Isolate SB111</strain>
    </source>
</reference>
<reference key="2">
    <citation type="journal article" date="1992" name="Physiol. Mol. Plant Pathol.">
        <title>Xylanases from the fungal maize pathogen Cochliobolus carbonum.</title>
        <authorList>
            <person name="Holden F.R."/>
            <person name="Walton J.D."/>
        </authorList>
        <dbReference type="AGRICOLA" id="IND92046127"/>
    </citation>
    <scope>PARTIAL PROTEIN SEQUENCE</scope>
</reference>
<comment type="function">
    <text>Major xylan-degrading enzyme. Contributes to the hydrolysis of arabinoxylan, the major component of maize cell-walls.</text>
</comment>
<comment type="catalytic activity">
    <reaction>
        <text>Endohydrolysis of (1-&gt;4)-beta-D-xylosidic linkages in xylans.</text>
        <dbReference type="EC" id="3.2.1.8"/>
    </reaction>
</comment>
<comment type="pathway">
    <text>Glycan degradation; xylan degradation.</text>
</comment>
<comment type="subcellular location">
    <subcellularLocation>
        <location>Secreted</location>
    </subcellularLocation>
</comment>
<comment type="PTM">
    <text>The N-terminus is blocked.</text>
</comment>
<comment type="similarity">
    <text evidence="6">Belongs to the glycosyl hydrolase 11 (cellulase G) family.</text>
</comment>